<protein>
    <recommendedName>
        <fullName evidence="1">Glucosamine-6-phosphate deaminase</fullName>
        <ecNumber evidence="1">3.5.99.6</ecNumber>
    </recommendedName>
    <alternativeName>
        <fullName evidence="1">GlcN6P deaminase</fullName>
        <shortName evidence="1">GNPDA</shortName>
    </alternativeName>
    <alternativeName>
        <fullName evidence="1">Glucosamine-6-phosphate isomerase</fullName>
    </alternativeName>
</protein>
<keyword id="KW-0119">Carbohydrate metabolism</keyword>
<keyword id="KW-0378">Hydrolase</keyword>
<keyword id="KW-1185">Reference proteome</keyword>
<reference key="1">
    <citation type="journal article" date="2001" name="J. Bacteriol.">
        <title>Genome of the bacterium Streptococcus pneumoniae strain R6.</title>
        <authorList>
            <person name="Hoskins J."/>
            <person name="Alborn W.E. Jr."/>
            <person name="Arnold J."/>
            <person name="Blaszczak L.C."/>
            <person name="Burgett S."/>
            <person name="DeHoff B.S."/>
            <person name="Estrem S.T."/>
            <person name="Fritz L."/>
            <person name="Fu D.-J."/>
            <person name="Fuller W."/>
            <person name="Geringer C."/>
            <person name="Gilmour R."/>
            <person name="Glass J.S."/>
            <person name="Khoja H."/>
            <person name="Kraft A.R."/>
            <person name="Lagace R.E."/>
            <person name="LeBlanc D.J."/>
            <person name="Lee L.N."/>
            <person name="Lefkowitz E.J."/>
            <person name="Lu J."/>
            <person name="Matsushima P."/>
            <person name="McAhren S.M."/>
            <person name="McHenney M."/>
            <person name="McLeaster K."/>
            <person name="Mundy C.W."/>
            <person name="Nicas T.I."/>
            <person name="Norris F.H."/>
            <person name="O'Gara M."/>
            <person name="Peery R.B."/>
            <person name="Robertson G.T."/>
            <person name="Rockey P."/>
            <person name="Sun P.-M."/>
            <person name="Winkler M.E."/>
            <person name="Yang Y."/>
            <person name="Young-Bellido M."/>
            <person name="Zhao G."/>
            <person name="Zook C.A."/>
            <person name="Baltz R.H."/>
            <person name="Jaskunas S.R."/>
            <person name="Rosteck P.R. Jr."/>
            <person name="Skatrud P.L."/>
            <person name="Glass J.I."/>
        </authorList>
    </citation>
    <scope>NUCLEOTIDE SEQUENCE [LARGE SCALE GENOMIC DNA]</scope>
    <source>
        <strain>ATCC BAA-255 / R6</strain>
    </source>
</reference>
<name>NAGB_STRR6</name>
<feature type="chain" id="PRO_0000160178" description="Glucosamine-6-phosphate deaminase">
    <location>
        <begin position="1"/>
        <end position="235"/>
    </location>
</feature>
<feature type="active site" description="Proton acceptor; for enolization step" evidence="1">
    <location>
        <position position="62"/>
    </location>
</feature>
<feature type="active site" description="For ring-opening step" evidence="1">
    <location>
        <position position="128"/>
    </location>
</feature>
<feature type="active site" description="Proton acceptor; for ring-opening step" evidence="1">
    <location>
        <position position="130"/>
    </location>
</feature>
<feature type="active site" description="For ring-opening step" evidence="1">
    <location>
        <position position="135"/>
    </location>
</feature>
<gene>
    <name evidence="1" type="primary">nagB</name>
    <name type="ordered locus">spr1272</name>
</gene>
<comment type="function">
    <text evidence="1">Catalyzes the reversible isomerization-deamination of glucosamine 6-phosphate (GlcN6P) to form fructose 6-phosphate (Fru6P) and ammonium ion.</text>
</comment>
<comment type="catalytic activity">
    <reaction evidence="1">
        <text>alpha-D-glucosamine 6-phosphate + H2O = beta-D-fructose 6-phosphate + NH4(+)</text>
        <dbReference type="Rhea" id="RHEA:12172"/>
        <dbReference type="ChEBI" id="CHEBI:15377"/>
        <dbReference type="ChEBI" id="CHEBI:28938"/>
        <dbReference type="ChEBI" id="CHEBI:57634"/>
        <dbReference type="ChEBI" id="CHEBI:75989"/>
        <dbReference type="EC" id="3.5.99.6"/>
    </reaction>
</comment>
<comment type="pathway">
    <text evidence="1">Amino-sugar metabolism; N-acetylneuraminate degradation; D-fructose 6-phosphate from N-acetylneuraminate: step 5/5.</text>
</comment>
<comment type="similarity">
    <text evidence="1">Belongs to the glucosamine/galactosamine-6-phosphate isomerase family. NagB subfamily.</text>
</comment>
<comment type="sequence caution" evidence="2">
    <conflict type="erroneous initiation">
        <sequence resource="EMBL-CDS" id="AAL00076"/>
    </conflict>
</comment>
<evidence type="ECO:0000255" key="1">
    <source>
        <dbReference type="HAMAP-Rule" id="MF_01241"/>
    </source>
</evidence>
<evidence type="ECO:0000305" key="2"/>
<sequence length="235" mass="25729">MKVIKVENQVQGGKVAFEILKEKLANGAQTLGLATGSSPLEFYKEIVESNLDFSNLTSVNLDEYVGLDGDNPQSYRYFMQENLFNQKPFKESFLPRGVKDNAEAEVERYNQILADHPVDLQILGIGRNGHIGFNEPGTPFDSQTHLVELDQSTIEANARFFAKIEDVPTQAISMGIKNILDAKSIILFAYGESKAEAIAGTVSGPVTENLPASSLQNHPDVTIIADAEALSLLEK</sequence>
<proteinExistence type="inferred from homology"/>
<organism>
    <name type="scientific">Streptococcus pneumoniae (strain ATCC BAA-255 / R6)</name>
    <dbReference type="NCBI Taxonomy" id="171101"/>
    <lineage>
        <taxon>Bacteria</taxon>
        <taxon>Bacillati</taxon>
        <taxon>Bacillota</taxon>
        <taxon>Bacilli</taxon>
        <taxon>Lactobacillales</taxon>
        <taxon>Streptococcaceae</taxon>
        <taxon>Streptococcus</taxon>
    </lineage>
</organism>
<accession>Q8DPA1</accession>
<dbReference type="EC" id="3.5.99.6" evidence="1"/>
<dbReference type="EMBL" id="AE007317">
    <property type="protein sequence ID" value="AAL00076.1"/>
    <property type="status" value="ALT_INIT"/>
    <property type="molecule type" value="Genomic_DNA"/>
</dbReference>
<dbReference type="PIR" id="G98030">
    <property type="entry name" value="G98030"/>
</dbReference>
<dbReference type="RefSeq" id="NP_358865.1">
    <property type="nucleotide sequence ID" value="NC_003098.1"/>
</dbReference>
<dbReference type="RefSeq" id="WP_000864623.1">
    <property type="nucleotide sequence ID" value="NC_003098.1"/>
</dbReference>
<dbReference type="SMR" id="Q8DPA1"/>
<dbReference type="STRING" id="171101.spr1272"/>
<dbReference type="KEGG" id="spr:spr1272"/>
<dbReference type="PATRIC" id="fig|171101.6.peg.1379"/>
<dbReference type="eggNOG" id="COG0363">
    <property type="taxonomic scope" value="Bacteria"/>
</dbReference>
<dbReference type="HOGENOM" id="CLU_049611_1_0_9"/>
<dbReference type="UniPathway" id="UPA00629">
    <property type="reaction ID" value="UER00684"/>
</dbReference>
<dbReference type="Proteomes" id="UP000000586">
    <property type="component" value="Chromosome"/>
</dbReference>
<dbReference type="GO" id="GO:0005737">
    <property type="term" value="C:cytoplasm"/>
    <property type="evidence" value="ECO:0000318"/>
    <property type="project" value="GO_Central"/>
</dbReference>
<dbReference type="GO" id="GO:0004342">
    <property type="term" value="F:glucosamine-6-phosphate deaminase activity"/>
    <property type="evidence" value="ECO:0000318"/>
    <property type="project" value="GO_Central"/>
</dbReference>
<dbReference type="GO" id="GO:0042802">
    <property type="term" value="F:identical protein binding"/>
    <property type="evidence" value="ECO:0000318"/>
    <property type="project" value="GO_Central"/>
</dbReference>
<dbReference type="GO" id="GO:0005975">
    <property type="term" value="P:carbohydrate metabolic process"/>
    <property type="evidence" value="ECO:0007669"/>
    <property type="project" value="InterPro"/>
</dbReference>
<dbReference type="GO" id="GO:0006043">
    <property type="term" value="P:glucosamine catabolic process"/>
    <property type="evidence" value="ECO:0000318"/>
    <property type="project" value="GO_Central"/>
</dbReference>
<dbReference type="GO" id="GO:0006046">
    <property type="term" value="P:N-acetylglucosamine catabolic process"/>
    <property type="evidence" value="ECO:0000318"/>
    <property type="project" value="GO_Central"/>
</dbReference>
<dbReference type="GO" id="GO:0019262">
    <property type="term" value="P:N-acetylneuraminate catabolic process"/>
    <property type="evidence" value="ECO:0000318"/>
    <property type="project" value="GO_Central"/>
</dbReference>
<dbReference type="CDD" id="cd01399">
    <property type="entry name" value="GlcN6P_deaminase"/>
    <property type="match status" value="1"/>
</dbReference>
<dbReference type="FunFam" id="3.40.50.1360:FF:000003">
    <property type="entry name" value="Glucosamine-6-phosphate deaminase"/>
    <property type="match status" value="1"/>
</dbReference>
<dbReference type="Gene3D" id="3.40.50.1360">
    <property type="match status" value="1"/>
</dbReference>
<dbReference type="HAMAP" id="MF_01241">
    <property type="entry name" value="GlcN6P_deamin"/>
    <property type="match status" value="1"/>
</dbReference>
<dbReference type="InterPro" id="IPR006148">
    <property type="entry name" value="Glc/Gal-6P_isomerase"/>
</dbReference>
<dbReference type="InterPro" id="IPR004547">
    <property type="entry name" value="Glucosamine6P_isomerase"/>
</dbReference>
<dbReference type="InterPro" id="IPR018321">
    <property type="entry name" value="Glucosamine6P_isomerase_CS"/>
</dbReference>
<dbReference type="InterPro" id="IPR037171">
    <property type="entry name" value="NagB/RpiA_transferase-like"/>
</dbReference>
<dbReference type="PANTHER" id="PTHR11280">
    <property type="entry name" value="GLUCOSAMINE-6-PHOSPHATE ISOMERASE"/>
    <property type="match status" value="1"/>
</dbReference>
<dbReference type="PANTHER" id="PTHR11280:SF5">
    <property type="entry name" value="GLUCOSAMINE-6-PHOSPHATE ISOMERASE"/>
    <property type="match status" value="1"/>
</dbReference>
<dbReference type="Pfam" id="PF01182">
    <property type="entry name" value="Glucosamine_iso"/>
    <property type="match status" value="1"/>
</dbReference>
<dbReference type="SUPFAM" id="SSF100950">
    <property type="entry name" value="NagB/RpiA/CoA transferase-like"/>
    <property type="match status" value="1"/>
</dbReference>
<dbReference type="PROSITE" id="PS01161">
    <property type="entry name" value="GLC_GALNAC_ISOMERASE"/>
    <property type="match status" value="1"/>
</dbReference>